<sequence length="554" mass="63207">MFYSLSVKNFILIDELEIEFSKGLCVITGETGAGKSILLDAILFCLGYKTSNNIIKHGKDYTVVNIIFSLNEKIKKFLIQNFIEPEELLLVKCLQKAEGRKSFFINNQIVTKTLIKQLANYLFELHGQNNNITLLEASTQRDILDSYGDLLEFRVKLAKCYQIWQNTRKEIEEITVKQNVIEQEIDYLNFVTEELTKLNIQIGEEETLTNIRQDLQNKNKDLQLIRDIIAQINNPEINISINRAEKLLARQRDNDRFKAIATSLEEAYNNLEVARQELSNLLDSFTYEEYNLEETEERLFLIKAISRKYNVPANELGIFLDKSLEKLVILKNKIANSHKLQAQEVLLQEQYYKLANDLSARRLIAAKHLEESLNQELKQLKMEKANFKIEIKTAIDPTASGNDDIVFKASTNPGMKAEEINKIASGGELSRFMLALKTSLFDKMIKPSIIFDEIDVGIGGEAADKVGDRLKKLSSVTQVIVITHQPQVAGKADLHIKIEKTQLEQETKIKVKALNLAERQRELARMISGKTITDASLKVAKELLYPVACPHDQK</sequence>
<organism>
    <name type="scientific">Rickettsia prowazekii (strain Madrid E)</name>
    <dbReference type="NCBI Taxonomy" id="272947"/>
    <lineage>
        <taxon>Bacteria</taxon>
        <taxon>Pseudomonadati</taxon>
        <taxon>Pseudomonadota</taxon>
        <taxon>Alphaproteobacteria</taxon>
        <taxon>Rickettsiales</taxon>
        <taxon>Rickettsiaceae</taxon>
        <taxon>Rickettsieae</taxon>
        <taxon>Rickettsia</taxon>
        <taxon>typhus group</taxon>
    </lineage>
</organism>
<evidence type="ECO:0000250" key="1"/>
<evidence type="ECO:0000255" key="2"/>
<evidence type="ECO:0000305" key="3"/>
<name>RECN_RICPR</name>
<gene>
    <name type="primary">recN</name>
    <name type="ordered locus">RP182</name>
</gene>
<feature type="chain" id="PRO_0000188025" description="DNA repair protein RecN">
    <location>
        <begin position="1"/>
        <end position="554"/>
    </location>
</feature>
<feature type="binding site" evidence="2">
    <location>
        <begin position="29"/>
        <end position="36"/>
    </location>
    <ligand>
        <name>ATP</name>
        <dbReference type="ChEBI" id="CHEBI:30616"/>
    </ligand>
</feature>
<accession>Q9ZDY2</accession>
<keyword id="KW-0067">ATP-binding</keyword>
<keyword id="KW-0227">DNA damage</keyword>
<keyword id="KW-0234">DNA repair</keyword>
<keyword id="KW-0547">Nucleotide-binding</keyword>
<keyword id="KW-1185">Reference proteome</keyword>
<dbReference type="EMBL" id="AJ235270">
    <property type="protein sequence ID" value="CAA14648.1"/>
    <property type="molecule type" value="Genomic_DNA"/>
</dbReference>
<dbReference type="PIR" id="A71729">
    <property type="entry name" value="A71729"/>
</dbReference>
<dbReference type="RefSeq" id="NP_220571.1">
    <property type="nucleotide sequence ID" value="NC_000963.1"/>
</dbReference>
<dbReference type="RefSeq" id="WP_010886227.1">
    <property type="nucleotide sequence ID" value="NC_000963.1"/>
</dbReference>
<dbReference type="SMR" id="Q9ZDY2"/>
<dbReference type="STRING" id="272947.gene:17555264"/>
<dbReference type="EnsemblBacteria" id="CAA14648">
    <property type="protein sequence ID" value="CAA14648"/>
    <property type="gene ID" value="CAA14648"/>
</dbReference>
<dbReference type="GeneID" id="57569310"/>
<dbReference type="KEGG" id="rpr:RP182"/>
<dbReference type="PATRIC" id="fig|272947.5.peg.189"/>
<dbReference type="eggNOG" id="COG0497">
    <property type="taxonomic scope" value="Bacteria"/>
</dbReference>
<dbReference type="HOGENOM" id="CLU_018297_3_1_5"/>
<dbReference type="OrthoDB" id="9806954at2"/>
<dbReference type="Proteomes" id="UP000002480">
    <property type="component" value="Chromosome"/>
</dbReference>
<dbReference type="GO" id="GO:0043590">
    <property type="term" value="C:bacterial nucleoid"/>
    <property type="evidence" value="ECO:0007669"/>
    <property type="project" value="TreeGrafter"/>
</dbReference>
<dbReference type="GO" id="GO:0005524">
    <property type="term" value="F:ATP binding"/>
    <property type="evidence" value="ECO:0007669"/>
    <property type="project" value="UniProtKB-KW"/>
</dbReference>
<dbReference type="GO" id="GO:0006310">
    <property type="term" value="P:DNA recombination"/>
    <property type="evidence" value="ECO:0007669"/>
    <property type="project" value="InterPro"/>
</dbReference>
<dbReference type="GO" id="GO:0006281">
    <property type="term" value="P:DNA repair"/>
    <property type="evidence" value="ECO:0007669"/>
    <property type="project" value="UniProtKB-KW"/>
</dbReference>
<dbReference type="GO" id="GO:0009432">
    <property type="term" value="P:SOS response"/>
    <property type="evidence" value="ECO:0007669"/>
    <property type="project" value="TreeGrafter"/>
</dbReference>
<dbReference type="CDD" id="cd03241">
    <property type="entry name" value="ABC_RecN"/>
    <property type="match status" value="2"/>
</dbReference>
<dbReference type="Gene3D" id="3.40.50.300">
    <property type="entry name" value="P-loop containing nucleotide triphosphate hydrolases"/>
    <property type="match status" value="2"/>
</dbReference>
<dbReference type="InterPro" id="IPR004604">
    <property type="entry name" value="DNA_recomb/repair_RecN"/>
</dbReference>
<dbReference type="InterPro" id="IPR027417">
    <property type="entry name" value="P-loop_NTPase"/>
</dbReference>
<dbReference type="InterPro" id="IPR003395">
    <property type="entry name" value="RecF/RecN/SMC_N"/>
</dbReference>
<dbReference type="NCBIfam" id="TIGR00634">
    <property type="entry name" value="recN"/>
    <property type="match status" value="1"/>
</dbReference>
<dbReference type="PANTHER" id="PTHR11059">
    <property type="entry name" value="DNA REPAIR PROTEIN RECN"/>
    <property type="match status" value="1"/>
</dbReference>
<dbReference type="PANTHER" id="PTHR11059:SF0">
    <property type="entry name" value="DNA REPAIR PROTEIN RECN"/>
    <property type="match status" value="1"/>
</dbReference>
<dbReference type="Pfam" id="PF02463">
    <property type="entry name" value="SMC_N"/>
    <property type="match status" value="1"/>
</dbReference>
<dbReference type="PIRSF" id="PIRSF003128">
    <property type="entry name" value="RecN"/>
    <property type="match status" value="1"/>
</dbReference>
<dbReference type="SUPFAM" id="SSF52540">
    <property type="entry name" value="P-loop containing nucleoside triphosphate hydrolases"/>
    <property type="match status" value="2"/>
</dbReference>
<proteinExistence type="inferred from homology"/>
<protein>
    <recommendedName>
        <fullName>DNA repair protein RecN</fullName>
    </recommendedName>
    <alternativeName>
        <fullName>Recombination protein N</fullName>
    </alternativeName>
</protein>
<reference key="1">
    <citation type="journal article" date="1998" name="Nature">
        <title>The genome sequence of Rickettsia prowazekii and the origin of mitochondria.</title>
        <authorList>
            <person name="Andersson S.G.E."/>
            <person name="Zomorodipour A."/>
            <person name="Andersson J.O."/>
            <person name="Sicheritz-Ponten T."/>
            <person name="Alsmark U.C.M."/>
            <person name="Podowski R.M."/>
            <person name="Naeslund A.K."/>
            <person name="Eriksson A.-S."/>
            <person name="Winkler H.H."/>
            <person name="Kurland C.G."/>
        </authorList>
    </citation>
    <scope>NUCLEOTIDE SEQUENCE [LARGE SCALE GENOMIC DNA]</scope>
    <source>
        <strain>Madrid E</strain>
    </source>
</reference>
<comment type="function">
    <text evidence="1">May be involved in recombinational repair of damaged DNA.</text>
</comment>
<comment type="similarity">
    <text evidence="3">Belongs to the RecN family.</text>
</comment>